<proteinExistence type="evidence at protein level"/>
<reference key="1">
    <citation type="journal article" date="2005" name="Science">
        <title>The transcriptional landscape of the mammalian genome.</title>
        <authorList>
            <person name="Carninci P."/>
            <person name="Kasukawa T."/>
            <person name="Katayama S."/>
            <person name="Gough J."/>
            <person name="Frith M.C."/>
            <person name="Maeda N."/>
            <person name="Oyama R."/>
            <person name="Ravasi T."/>
            <person name="Lenhard B."/>
            <person name="Wells C."/>
            <person name="Kodzius R."/>
            <person name="Shimokawa K."/>
            <person name="Bajic V.B."/>
            <person name="Brenner S.E."/>
            <person name="Batalov S."/>
            <person name="Forrest A.R."/>
            <person name="Zavolan M."/>
            <person name="Davis M.J."/>
            <person name="Wilming L.G."/>
            <person name="Aidinis V."/>
            <person name="Allen J.E."/>
            <person name="Ambesi-Impiombato A."/>
            <person name="Apweiler R."/>
            <person name="Aturaliya R.N."/>
            <person name="Bailey T.L."/>
            <person name="Bansal M."/>
            <person name="Baxter L."/>
            <person name="Beisel K.W."/>
            <person name="Bersano T."/>
            <person name="Bono H."/>
            <person name="Chalk A.M."/>
            <person name="Chiu K.P."/>
            <person name="Choudhary V."/>
            <person name="Christoffels A."/>
            <person name="Clutterbuck D.R."/>
            <person name="Crowe M.L."/>
            <person name="Dalla E."/>
            <person name="Dalrymple B.P."/>
            <person name="de Bono B."/>
            <person name="Della Gatta G."/>
            <person name="di Bernardo D."/>
            <person name="Down T."/>
            <person name="Engstrom P."/>
            <person name="Fagiolini M."/>
            <person name="Faulkner G."/>
            <person name="Fletcher C.F."/>
            <person name="Fukushima T."/>
            <person name="Furuno M."/>
            <person name="Futaki S."/>
            <person name="Gariboldi M."/>
            <person name="Georgii-Hemming P."/>
            <person name="Gingeras T.R."/>
            <person name="Gojobori T."/>
            <person name="Green R.E."/>
            <person name="Gustincich S."/>
            <person name="Harbers M."/>
            <person name="Hayashi Y."/>
            <person name="Hensch T.K."/>
            <person name="Hirokawa N."/>
            <person name="Hill D."/>
            <person name="Huminiecki L."/>
            <person name="Iacono M."/>
            <person name="Ikeo K."/>
            <person name="Iwama A."/>
            <person name="Ishikawa T."/>
            <person name="Jakt M."/>
            <person name="Kanapin A."/>
            <person name="Katoh M."/>
            <person name="Kawasawa Y."/>
            <person name="Kelso J."/>
            <person name="Kitamura H."/>
            <person name="Kitano H."/>
            <person name="Kollias G."/>
            <person name="Krishnan S.P."/>
            <person name="Kruger A."/>
            <person name="Kummerfeld S.K."/>
            <person name="Kurochkin I.V."/>
            <person name="Lareau L.F."/>
            <person name="Lazarevic D."/>
            <person name="Lipovich L."/>
            <person name="Liu J."/>
            <person name="Liuni S."/>
            <person name="McWilliam S."/>
            <person name="Madan Babu M."/>
            <person name="Madera M."/>
            <person name="Marchionni L."/>
            <person name="Matsuda H."/>
            <person name="Matsuzawa S."/>
            <person name="Miki H."/>
            <person name="Mignone F."/>
            <person name="Miyake S."/>
            <person name="Morris K."/>
            <person name="Mottagui-Tabar S."/>
            <person name="Mulder N."/>
            <person name="Nakano N."/>
            <person name="Nakauchi H."/>
            <person name="Ng P."/>
            <person name="Nilsson R."/>
            <person name="Nishiguchi S."/>
            <person name="Nishikawa S."/>
            <person name="Nori F."/>
            <person name="Ohara O."/>
            <person name="Okazaki Y."/>
            <person name="Orlando V."/>
            <person name="Pang K.C."/>
            <person name="Pavan W.J."/>
            <person name="Pavesi G."/>
            <person name="Pesole G."/>
            <person name="Petrovsky N."/>
            <person name="Piazza S."/>
            <person name="Reed J."/>
            <person name="Reid J.F."/>
            <person name="Ring B.Z."/>
            <person name="Ringwald M."/>
            <person name="Rost B."/>
            <person name="Ruan Y."/>
            <person name="Salzberg S.L."/>
            <person name="Sandelin A."/>
            <person name="Schneider C."/>
            <person name="Schoenbach C."/>
            <person name="Sekiguchi K."/>
            <person name="Semple C.A."/>
            <person name="Seno S."/>
            <person name="Sessa L."/>
            <person name="Sheng Y."/>
            <person name="Shibata Y."/>
            <person name="Shimada H."/>
            <person name="Shimada K."/>
            <person name="Silva D."/>
            <person name="Sinclair B."/>
            <person name="Sperling S."/>
            <person name="Stupka E."/>
            <person name="Sugiura K."/>
            <person name="Sultana R."/>
            <person name="Takenaka Y."/>
            <person name="Taki K."/>
            <person name="Tammoja K."/>
            <person name="Tan S.L."/>
            <person name="Tang S."/>
            <person name="Taylor M.S."/>
            <person name="Tegner J."/>
            <person name="Teichmann S.A."/>
            <person name="Ueda H.R."/>
            <person name="van Nimwegen E."/>
            <person name="Verardo R."/>
            <person name="Wei C.L."/>
            <person name="Yagi K."/>
            <person name="Yamanishi H."/>
            <person name="Zabarovsky E."/>
            <person name="Zhu S."/>
            <person name="Zimmer A."/>
            <person name="Hide W."/>
            <person name="Bult C."/>
            <person name="Grimmond S.M."/>
            <person name="Teasdale R.D."/>
            <person name="Liu E.T."/>
            <person name="Brusic V."/>
            <person name="Quackenbush J."/>
            <person name="Wahlestedt C."/>
            <person name="Mattick J.S."/>
            <person name="Hume D.A."/>
            <person name="Kai C."/>
            <person name="Sasaki D."/>
            <person name="Tomaru Y."/>
            <person name="Fukuda S."/>
            <person name="Kanamori-Katayama M."/>
            <person name="Suzuki M."/>
            <person name="Aoki J."/>
            <person name="Arakawa T."/>
            <person name="Iida J."/>
            <person name="Imamura K."/>
            <person name="Itoh M."/>
            <person name="Kato T."/>
            <person name="Kawaji H."/>
            <person name="Kawagashira N."/>
            <person name="Kawashima T."/>
            <person name="Kojima M."/>
            <person name="Kondo S."/>
            <person name="Konno H."/>
            <person name="Nakano K."/>
            <person name="Ninomiya N."/>
            <person name="Nishio T."/>
            <person name="Okada M."/>
            <person name="Plessy C."/>
            <person name="Shibata K."/>
            <person name="Shiraki T."/>
            <person name="Suzuki S."/>
            <person name="Tagami M."/>
            <person name="Waki K."/>
            <person name="Watahiki A."/>
            <person name="Okamura-Oho Y."/>
            <person name="Suzuki H."/>
            <person name="Kawai J."/>
            <person name="Hayashizaki Y."/>
        </authorList>
    </citation>
    <scope>NUCLEOTIDE SEQUENCE [LARGE SCALE MRNA]</scope>
    <source>
        <strain>BALB/cJ</strain>
    </source>
</reference>
<reference key="2">
    <citation type="journal article" date="2010" name="Cell">
        <title>A tissue-specific atlas of mouse protein phosphorylation and expression.</title>
        <authorList>
            <person name="Huttlin E.L."/>
            <person name="Jedrychowski M.P."/>
            <person name="Elias J.E."/>
            <person name="Goswami T."/>
            <person name="Rad R."/>
            <person name="Beausoleil S.A."/>
            <person name="Villen J."/>
            <person name="Haas W."/>
            <person name="Sowa M.E."/>
            <person name="Gygi S.P."/>
        </authorList>
    </citation>
    <scope>PHOSPHORYLATION [LARGE SCALE ANALYSIS] AT SER-371 AND SER-374</scope>
    <scope>IDENTIFICATION BY MASS SPECTROMETRY [LARGE SCALE ANALYSIS]</scope>
    <source>
        <tissue>Testis</tissue>
    </source>
</reference>
<evidence type="ECO:0000250" key="1">
    <source>
        <dbReference type="UniProtKB" id="Q9Y6R9"/>
    </source>
</evidence>
<evidence type="ECO:0000255" key="2"/>
<evidence type="ECO:0000256" key="3">
    <source>
        <dbReference type="SAM" id="MobiDB-lite"/>
    </source>
</evidence>
<evidence type="ECO:0000305" key="4"/>
<evidence type="ECO:0000312" key="5">
    <source>
        <dbReference type="MGI" id="MGI:2685005"/>
    </source>
</evidence>
<evidence type="ECO:0007744" key="6">
    <source>
    </source>
</evidence>
<accession>Q3UJV1</accession>
<protein>
    <recommendedName>
        <fullName evidence="1">Centrosomal protein CCDC61</fullName>
    </recommendedName>
    <alternativeName>
        <fullName evidence="1">Coiled-coil domain-containing protein 61</fullName>
    </alternativeName>
    <alternativeName>
        <fullName evidence="1">VFL3 homolog</fullName>
    </alternativeName>
</protein>
<sequence>MDQPAGLQVDYIFRGVEHAVRVVVSGQVLELEVEDRMTADQWRGEFDANFIEDLTHKTGNFKQFSIFCNMLESALTQSSESVTLDLLTYTDLESLRSRKLGGRPGALAPRSAQLNSKRYLILIYSVEFDRIHYPLPLPYQGKPDPVVLQGIIRSLKEELGHLRGLNGGQDARETEIWHLREQVTRLTSEKRELEAQLGRSREEALAGRAARQEAESLRGLVRGLELELRQERGLGGRAAGRRSQDSRRLAKELEEVKASERNLRARLKTLNSELAMYRRGRRTLPPVAVREGRASSSRERSTSRGRAVTRSSSRESSRGARGRGRPAHPSPSPTGSRAPRFDPTAFVKAKEKKQREIRMKQQQQQRNRMGSGGSGDGPSVSWSQQTRPAAAVTGRGDAVNRSRNRSSSVDSFRSRCSSVSSCSELEDFSHSVSRSRRCRGRGKPPSPTPWSRSKTKSTTQERSDHQRHLASSGGWVPIKEYSSDFQGADMAEIDARLKALQEYMNRLDTRS</sequence>
<name>CCD61_MOUSE</name>
<comment type="function">
    <text evidence="1">Microtubule-binding centrosomal protein required for centriole cohesion, independently of the centrosome-associated protein/CEP250 and rootletin/CROCC linker. In interphase, required for anchoring microtubule at the mother centriole subdistal appendages and for centrosome positioning. During mitosis, may be involved in spindle assembly and chromatin alignment by regulating the organization of spindle microtubules into a symmetrical structure. Plays a non-essential role in ciliogenesis.</text>
</comment>
<comment type="subunit">
    <text evidence="1">Forms homodimers (via head domain) (By similarity). Interacts with CEP170 (By similarity). Interacts with PCM1 and CEP131 (By similarity). Binds tubulin (By similarity).</text>
</comment>
<comment type="subcellular location">
    <subcellularLocation>
        <location evidence="1">Cytoplasm</location>
        <location evidence="1">Cytoskeleton</location>
        <location evidence="1">Microtubule organizing center</location>
        <location evidence="1">Centrosome</location>
    </subcellularLocation>
    <subcellularLocation>
        <location evidence="1">Cytoplasm</location>
        <location evidence="1">Cytoskeleton</location>
        <location evidence="1">Microtubule organizing center</location>
        <location evidence="1">Centrosome</location>
        <location evidence="1">Centriolar satellite</location>
    </subcellularLocation>
    <subcellularLocation>
        <location evidence="1">Cytoplasm</location>
        <location evidence="1">Cytoskeleton</location>
        <location evidence="1">Cilium basal body</location>
    </subcellularLocation>
    <text evidence="1">Localization at the centriolar satellite is dependent on intact microtubule network. Localizes at the centriole subdistal appendages and proximal ends. Localized to centrosomal/satellite-like structures with the onset of centrosome separation in early G2.</text>
</comment>
<comment type="domain">
    <text evidence="1">The coiled-coil domains are involved in microtubule-binding.</text>
</comment>
<comment type="miscellaneous">
    <text evidence="1">The N-terminal 3D structure (head domain) resembles that of NHEJ1/XLF, PAXX, SASS6 and XRCC4.</text>
</comment>
<comment type="similarity">
    <text evidence="4">Belongs to the CCDC61 family.</text>
</comment>
<gene>
    <name evidence="5" type="primary">Ccdc61</name>
    <name type="synonym">Gm159</name>
    <name evidence="1" type="synonym">VFL3</name>
</gene>
<dbReference type="EMBL" id="AK146297">
    <property type="protein sequence ID" value="BAE27054.1"/>
    <property type="molecule type" value="mRNA"/>
</dbReference>
<dbReference type="CCDS" id="CCDS39791.1"/>
<dbReference type="RefSeq" id="NP_001028486.1">
    <property type="nucleotide sequence ID" value="NM_001033314.4"/>
</dbReference>
<dbReference type="RefSeq" id="NP_001406169.1">
    <property type="nucleotide sequence ID" value="NM_001419240.1"/>
</dbReference>
<dbReference type="RefSeq" id="NP_001406170.1">
    <property type="nucleotide sequence ID" value="NM_001419241.1"/>
</dbReference>
<dbReference type="RefSeq" id="NP_001406171.1">
    <property type="nucleotide sequence ID" value="NM_001419242.1"/>
</dbReference>
<dbReference type="RefSeq" id="XP_006539877.2">
    <property type="nucleotide sequence ID" value="XM_006539814.5"/>
</dbReference>
<dbReference type="RefSeq" id="XP_006539878.1">
    <property type="nucleotide sequence ID" value="XM_006539815.1"/>
</dbReference>
<dbReference type="RefSeq" id="XP_006539879.1">
    <property type="nucleotide sequence ID" value="XM_006539816.1"/>
</dbReference>
<dbReference type="RefSeq" id="XP_006539881.1">
    <property type="nucleotide sequence ID" value="XM_006539818.1"/>
</dbReference>
<dbReference type="SMR" id="Q3UJV1"/>
<dbReference type="FunCoup" id="Q3UJV1">
    <property type="interactions" value="714"/>
</dbReference>
<dbReference type="STRING" id="10090.ENSMUSP00000096377"/>
<dbReference type="GlyGen" id="Q3UJV1">
    <property type="glycosylation" value="2 sites"/>
</dbReference>
<dbReference type="iPTMnet" id="Q3UJV1"/>
<dbReference type="PhosphoSitePlus" id="Q3UJV1"/>
<dbReference type="jPOST" id="Q3UJV1"/>
<dbReference type="PaxDb" id="10090-ENSMUSP00000096377"/>
<dbReference type="PeptideAtlas" id="Q3UJV1"/>
<dbReference type="ProteomicsDB" id="265712"/>
<dbReference type="Pumba" id="Q3UJV1"/>
<dbReference type="Antibodypedia" id="49264">
    <property type="antibodies" value="119 antibodies from 18 providers"/>
</dbReference>
<dbReference type="DNASU" id="232933"/>
<dbReference type="Ensembl" id="ENSMUST00000098780.10">
    <property type="protein sequence ID" value="ENSMUSP00000096377.4"/>
    <property type="gene ID" value="ENSMUSG00000074358.10"/>
</dbReference>
<dbReference type="GeneID" id="232933"/>
<dbReference type="KEGG" id="mmu:232933"/>
<dbReference type="UCSC" id="uc009fjw.1">
    <property type="organism name" value="mouse"/>
</dbReference>
<dbReference type="AGR" id="MGI:2685005"/>
<dbReference type="CTD" id="729440"/>
<dbReference type="MGI" id="MGI:2685005">
    <property type="gene designation" value="Ccdc61"/>
</dbReference>
<dbReference type="VEuPathDB" id="HostDB:ENSMUSG00000074358"/>
<dbReference type="eggNOG" id="ENOG502QRAS">
    <property type="taxonomic scope" value="Eukaryota"/>
</dbReference>
<dbReference type="GeneTree" id="ENSGT00940000154133"/>
<dbReference type="HOGENOM" id="CLU_038746_1_0_1"/>
<dbReference type="InParanoid" id="Q3UJV1"/>
<dbReference type="OMA" id="PMKEYSS"/>
<dbReference type="OrthoDB" id="568137at2759"/>
<dbReference type="PhylomeDB" id="Q3UJV1"/>
<dbReference type="TreeFam" id="TF329415"/>
<dbReference type="BioGRID-ORCS" id="232933">
    <property type="hits" value="1 hit in 78 CRISPR screens"/>
</dbReference>
<dbReference type="PRO" id="PR:Q3UJV1"/>
<dbReference type="Proteomes" id="UP000000589">
    <property type="component" value="Chromosome 7"/>
</dbReference>
<dbReference type="RNAct" id="Q3UJV1">
    <property type="molecule type" value="protein"/>
</dbReference>
<dbReference type="Bgee" id="ENSMUSG00000074358">
    <property type="expression patterns" value="Expressed in indifferent gonad and 187 other cell types or tissues"/>
</dbReference>
<dbReference type="ExpressionAtlas" id="Q3UJV1">
    <property type="expression patterns" value="baseline and differential"/>
</dbReference>
<dbReference type="GO" id="GO:0034451">
    <property type="term" value="C:centriolar satellite"/>
    <property type="evidence" value="ECO:0000250"/>
    <property type="project" value="UniProtKB"/>
</dbReference>
<dbReference type="GO" id="GO:0120103">
    <property type="term" value="C:centriolar subdistal appendage"/>
    <property type="evidence" value="ECO:0000250"/>
    <property type="project" value="UniProtKB"/>
</dbReference>
<dbReference type="GO" id="GO:0005813">
    <property type="term" value="C:centrosome"/>
    <property type="evidence" value="ECO:0000250"/>
    <property type="project" value="UniProtKB"/>
</dbReference>
<dbReference type="GO" id="GO:0036064">
    <property type="term" value="C:ciliary basal body"/>
    <property type="evidence" value="ECO:0000250"/>
    <property type="project" value="UniProtKB"/>
</dbReference>
<dbReference type="GO" id="GO:0005737">
    <property type="term" value="C:cytoplasm"/>
    <property type="evidence" value="ECO:0007669"/>
    <property type="project" value="UniProtKB-KW"/>
</dbReference>
<dbReference type="GO" id="GO:0005815">
    <property type="term" value="C:microtubule organizing center"/>
    <property type="evidence" value="ECO:0000250"/>
    <property type="project" value="UniProtKB"/>
</dbReference>
<dbReference type="GO" id="GO:0042802">
    <property type="term" value="F:identical protein binding"/>
    <property type="evidence" value="ECO:0000250"/>
    <property type="project" value="UniProtKB"/>
</dbReference>
<dbReference type="GO" id="GO:0008017">
    <property type="term" value="F:microtubule binding"/>
    <property type="evidence" value="ECO:0007669"/>
    <property type="project" value="Ensembl"/>
</dbReference>
<dbReference type="GO" id="GO:0030030">
    <property type="term" value="P:cell projection organization"/>
    <property type="evidence" value="ECO:0007669"/>
    <property type="project" value="UniProtKB-KW"/>
</dbReference>
<dbReference type="GO" id="GO:0098534">
    <property type="term" value="P:centriole assembly"/>
    <property type="evidence" value="ECO:0000250"/>
    <property type="project" value="UniProtKB"/>
</dbReference>
<dbReference type="GO" id="GO:0090307">
    <property type="term" value="P:mitotic spindle assembly"/>
    <property type="evidence" value="ECO:0000250"/>
    <property type="project" value="UniProtKB"/>
</dbReference>
<dbReference type="CDD" id="cd22284">
    <property type="entry name" value="HD_CCDC61_N"/>
    <property type="match status" value="1"/>
</dbReference>
<dbReference type="Gene3D" id="1.20.5.1160">
    <property type="entry name" value="Vasodilator-stimulated phosphoprotein"/>
    <property type="match status" value="1"/>
</dbReference>
<dbReference type="InterPro" id="IPR049733">
    <property type="entry name" value="CCDC61_N"/>
</dbReference>
<dbReference type="PANTHER" id="PTHR22691:SF1">
    <property type="entry name" value="CENTROSOMAL PROTEIN CCDC61"/>
    <property type="match status" value="1"/>
</dbReference>
<dbReference type="PANTHER" id="PTHR22691">
    <property type="entry name" value="YEAST SPT2-RELATED"/>
    <property type="match status" value="1"/>
</dbReference>
<keyword id="KW-0007">Acetylation</keyword>
<keyword id="KW-0966">Cell projection</keyword>
<keyword id="KW-0970">Cilium biogenesis/degradation</keyword>
<keyword id="KW-0175">Coiled coil</keyword>
<keyword id="KW-0963">Cytoplasm</keyword>
<keyword id="KW-0206">Cytoskeleton</keyword>
<keyword id="KW-0597">Phosphoprotein</keyword>
<keyword id="KW-1185">Reference proteome</keyword>
<feature type="chain" id="PRO_0000311256" description="Centrosomal protein CCDC61">
    <location>
        <begin position="1"/>
        <end position="511"/>
    </location>
</feature>
<feature type="region of interest" description="Head domain" evidence="1">
    <location>
        <begin position="1"/>
        <end position="143"/>
    </location>
</feature>
<feature type="region of interest" description="Disordered" evidence="3">
    <location>
        <begin position="284"/>
        <end position="413"/>
    </location>
</feature>
<feature type="region of interest" description="Disordered" evidence="3">
    <location>
        <begin position="429"/>
        <end position="476"/>
    </location>
</feature>
<feature type="coiled-coil region" evidence="2">
    <location>
        <begin position="176"/>
        <end position="203"/>
    </location>
</feature>
<feature type="coiled-coil region" evidence="2">
    <location>
        <begin position="246"/>
        <end position="273"/>
    </location>
</feature>
<feature type="compositionally biased region" description="Basic and acidic residues" evidence="3">
    <location>
        <begin position="290"/>
        <end position="302"/>
    </location>
</feature>
<feature type="compositionally biased region" description="Low complexity" evidence="3">
    <location>
        <begin position="360"/>
        <end position="369"/>
    </location>
</feature>
<feature type="compositionally biased region" description="Basic residues" evidence="3">
    <location>
        <begin position="433"/>
        <end position="442"/>
    </location>
</feature>
<feature type="compositionally biased region" description="Polar residues" evidence="3">
    <location>
        <begin position="449"/>
        <end position="458"/>
    </location>
</feature>
<feature type="modified residue" description="N-acetylmethionine" evidence="1">
    <location>
        <position position="1"/>
    </location>
</feature>
<feature type="modified residue" description="Phosphothreonine" evidence="1">
    <location>
        <position position="283"/>
    </location>
</feature>
<feature type="modified residue" description="Phosphoserine" evidence="1">
    <location>
        <position position="330"/>
    </location>
</feature>
<feature type="modified residue" description="Phosphoserine" evidence="1">
    <location>
        <position position="332"/>
    </location>
</feature>
<feature type="modified residue" description="Phosphoserine" evidence="6">
    <location>
        <position position="371"/>
    </location>
</feature>
<feature type="modified residue" description="Phosphoserine" evidence="6">
    <location>
        <position position="374"/>
    </location>
</feature>
<feature type="modified residue" description="Phosphoserine" evidence="1">
    <location>
        <position position="446"/>
    </location>
</feature>
<feature type="modified residue" description="Phosphoserine" evidence="1">
    <location>
        <position position="472"/>
    </location>
</feature>
<organism>
    <name type="scientific">Mus musculus</name>
    <name type="common">Mouse</name>
    <dbReference type="NCBI Taxonomy" id="10090"/>
    <lineage>
        <taxon>Eukaryota</taxon>
        <taxon>Metazoa</taxon>
        <taxon>Chordata</taxon>
        <taxon>Craniata</taxon>
        <taxon>Vertebrata</taxon>
        <taxon>Euteleostomi</taxon>
        <taxon>Mammalia</taxon>
        <taxon>Eutheria</taxon>
        <taxon>Euarchontoglires</taxon>
        <taxon>Glires</taxon>
        <taxon>Rodentia</taxon>
        <taxon>Myomorpha</taxon>
        <taxon>Muroidea</taxon>
        <taxon>Muridae</taxon>
        <taxon>Murinae</taxon>
        <taxon>Mus</taxon>
        <taxon>Mus</taxon>
    </lineage>
</organism>